<evidence type="ECO:0000255" key="1">
    <source>
        <dbReference type="HAMAP-Rule" id="MF_03061"/>
    </source>
</evidence>
<evidence type="ECO:0000305" key="2"/>
<keyword id="KW-0251">Elongation factor</keyword>
<keyword id="KW-0342">GTP-binding</keyword>
<keyword id="KW-0496">Mitochondrion</keyword>
<keyword id="KW-0547">Nucleotide-binding</keyword>
<keyword id="KW-0648">Protein biosynthesis</keyword>
<keyword id="KW-1185">Reference proteome</keyword>
<keyword id="KW-0809">Transit peptide</keyword>
<reference key="1">
    <citation type="journal article" date="2004" name="Nature">
        <title>Genome evolution in yeasts.</title>
        <authorList>
            <person name="Dujon B."/>
            <person name="Sherman D."/>
            <person name="Fischer G."/>
            <person name="Durrens P."/>
            <person name="Casaregola S."/>
            <person name="Lafontaine I."/>
            <person name="de Montigny J."/>
            <person name="Marck C."/>
            <person name="Neuveglise C."/>
            <person name="Talla E."/>
            <person name="Goffard N."/>
            <person name="Frangeul L."/>
            <person name="Aigle M."/>
            <person name="Anthouard V."/>
            <person name="Babour A."/>
            <person name="Barbe V."/>
            <person name="Barnay S."/>
            <person name="Blanchin S."/>
            <person name="Beckerich J.-M."/>
            <person name="Beyne E."/>
            <person name="Bleykasten C."/>
            <person name="Boisrame A."/>
            <person name="Boyer J."/>
            <person name="Cattolico L."/>
            <person name="Confanioleri F."/>
            <person name="de Daruvar A."/>
            <person name="Despons L."/>
            <person name="Fabre E."/>
            <person name="Fairhead C."/>
            <person name="Ferry-Dumazet H."/>
            <person name="Groppi A."/>
            <person name="Hantraye F."/>
            <person name="Hennequin C."/>
            <person name="Jauniaux N."/>
            <person name="Joyet P."/>
            <person name="Kachouri R."/>
            <person name="Kerrest A."/>
            <person name="Koszul R."/>
            <person name="Lemaire M."/>
            <person name="Lesur I."/>
            <person name="Ma L."/>
            <person name="Muller H."/>
            <person name="Nicaud J.-M."/>
            <person name="Nikolski M."/>
            <person name="Oztas S."/>
            <person name="Ozier-Kalogeropoulos O."/>
            <person name="Pellenz S."/>
            <person name="Potier S."/>
            <person name="Richard G.-F."/>
            <person name="Straub M.-L."/>
            <person name="Suleau A."/>
            <person name="Swennen D."/>
            <person name="Tekaia F."/>
            <person name="Wesolowski-Louvel M."/>
            <person name="Westhof E."/>
            <person name="Wirth B."/>
            <person name="Zeniou-Meyer M."/>
            <person name="Zivanovic Y."/>
            <person name="Bolotin-Fukuhara M."/>
            <person name="Thierry A."/>
            <person name="Bouchier C."/>
            <person name="Caudron B."/>
            <person name="Scarpelli C."/>
            <person name="Gaillardin C."/>
            <person name="Weissenbach J."/>
            <person name="Wincker P."/>
            <person name="Souciet J.-L."/>
        </authorList>
    </citation>
    <scope>NUCLEOTIDE SEQUENCE [LARGE SCALE GENOMIC DNA]</scope>
    <source>
        <strain>ATCC 8585 / CBS 2359 / DSM 70799 / NBRC 1267 / NRRL Y-1140 / WM37</strain>
    </source>
</reference>
<organism>
    <name type="scientific">Kluyveromyces lactis (strain ATCC 8585 / CBS 2359 / DSM 70799 / NBRC 1267 / NRRL Y-1140 / WM37)</name>
    <name type="common">Yeast</name>
    <name type="synonym">Candida sphaerica</name>
    <dbReference type="NCBI Taxonomy" id="284590"/>
    <lineage>
        <taxon>Eukaryota</taxon>
        <taxon>Fungi</taxon>
        <taxon>Dikarya</taxon>
        <taxon>Ascomycota</taxon>
        <taxon>Saccharomycotina</taxon>
        <taxon>Saccharomycetes</taxon>
        <taxon>Saccharomycetales</taxon>
        <taxon>Saccharomycetaceae</taxon>
        <taxon>Kluyveromyces</taxon>
    </lineage>
</organism>
<sequence>MFKRVGLIAGIAGPVAGSSRFSAVSFSKRAFSASSKRCTYEEERAVLDEIQPLLSEKDIDASKKLRNIGISAHIDSGKTTFTERVLYYTGRIKAIHEVRGRDNVGAKMDSMDLEREKGITIQSAATYCSWDKDNESYHFNLIDTPGHIDFTIEVERALRILDGAVLVVCAVSGVQSQTVTVDRQMRRYNVPRVTFINKMDRMGANPFRSIEQINNKLRIPAAAIQVPIGAESELKGVVNIIDRVAIYNEGSNGEKLVTGPVPEDLKDLVEEKRALLIETLADVDDEIAEIFLEEKEPSVDEIKAAIRRATIARKFSPVLMGSALANTGIQNVLDAIVEYLPNPSEVLNTGLDIAKDETKVNLIPSSTQPFVGLAFKLEEGKYGQLTYIRVYQGKMRKGGYITNVKTGKKVKISRLVRMHSNDMEDVDEVGAGEICATFGIDCSSGDTFTDGTLKYSMSSMFVPDAVISLSITPKSKDSTNFSKALNRFQKEDPTFRVRFDPESKETVISGMGELHLEIYVERMRREYNVECVTGKPQVSYRESIQSSAEFDYTHKKQSGGAGQYGRVMGNLSHIENSNTNNFETAIVGGRIPDKYLAACAKGFEEACEKGPLIGHRVLGVNMLINDGAIHAVDSNELAFKTATMAAFRQAFLESQPVILEPIMNVSVTSPNEFQGNVIGLMNKLQAVIQDTENGQDEFTITAECPLNTMFGFATSLRASTQGKGEFSLEFKHYAPASPQLQKQLIADYQKKQQQK</sequence>
<protein>
    <recommendedName>
        <fullName evidence="1">Elongation factor G, mitochondrial</fullName>
        <shortName evidence="1">EF-Gmt</shortName>
    </recommendedName>
    <alternativeName>
        <fullName evidence="1">Elongation factor G 1, mitochondrial</fullName>
        <shortName evidence="1">mEF-G 1</shortName>
    </alternativeName>
    <alternativeName>
        <fullName evidence="1">Elongation factor G1</fullName>
    </alternativeName>
</protein>
<proteinExistence type="inferred from homology"/>
<comment type="function">
    <text evidence="1">Mitochondrial GTPase that catalyzes the GTP-dependent ribosomal translocation step during translation elongation. During this step, the ribosome changes from the pre-translocational (PRE) to the post-translocational (POST) state as the newly formed A-site-bound peptidyl-tRNA and P-site-bound deacylated tRNA move to the P and E sites, respectively. Catalyzes the coordinated movement of the two tRNA molecules, the mRNA and conformational changes in the ribosome.</text>
</comment>
<comment type="pathway">
    <text evidence="1">Protein biosynthesis; polypeptide chain elongation.</text>
</comment>
<comment type="subcellular location">
    <subcellularLocation>
        <location evidence="1">Mitochondrion</location>
    </subcellularLocation>
</comment>
<comment type="similarity">
    <text evidence="2">Belongs to the TRAFAC class translation factor GTPase superfamily. Classic translation factor GTPase family. EF-G/EF-2 subfamily.</text>
</comment>
<feature type="transit peptide" description="Mitochondrion" evidence="1">
    <location>
        <begin position="1"/>
        <end position="38"/>
    </location>
</feature>
<feature type="chain" id="PRO_0000385573" description="Elongation factor G, mitochondrial">
    <location>
        <begin position="39"/>
        <end position="755"/>
    </location>
</feature>
<feature type="domain" description="tr-type G">
    <location>
        <begin position="63"/>
        <end position="344"/>
    </location>
</feature>
<feature type="binding site" evidence="1">
    <location>
        <begin position="72"/>
        <end position="79"/>
    </location>
    <ligand>
        <name>GTP</name>
        <dbReference type="ChEBI" id="CHEBI:37565"/>
    </ligand>
</feature>
<feature type="binding site" evidence="1">
    <location>
        <begin position="143"/>
        <end position="147"/>
    </location>
    <ligand>
        <name>GTP</name>
        <dbReference type="ChEBI" id="CHEBI:37565"/>
    </ligand>
</feature>
<feature type="binding site" evidence="1">
    <location>
        <begin position="197"/>
        <end position="200"/>
    </location>
    <ligand>
        <name>GTP</name>
        <dbReference type="ChEBI" id="CHEBI:37565"/>
    </ligand>
</feature>
<dbReference type="EMBL" id="CR382124">
    <property type="protein sequence ID" value="CAH00400.1"/>
    <property type="molecule type" value="Genomic_DNA"/>
</dbReference>
<dbReference type="RefSeq" id="XP_453304.1">
    <property type="nucleotide sequence ID" value="XM_453304.1"/>
</dbReference>
<dbReference type="SMR" id="Q6CRY5"/>
<dbReference type="FunCoup" id="Q6CRY5">
    <property type="interactions" value="678"/>
</dbReference>
<dbReference type="STRING" id="284590.Q6CRY5"/>
<dbReference type="PaxDb" id="284590-Q6CRY5"/>
<dbReference type="KEGG" id="kla:KLLA0_D05467g"/>
<dbReference type="eggNOG" id="KOG0465">
    <property type="taxonomic scope" value="Eukaryota"/>
</dbReference>
<dbReference type="HOGENOM" id="CLU_002794_4_0_1"/>
<dbReference type="InParanoid" id="Q6CRY5"/>
<dbReference type="OMA" id="GQFAKVQ"/>
<dbReference type="UniPathway" id="UPA00345"/>
<dbReference type="Proteomes" id="UP000000598">
    <property type="component" value="Chromosome D"/>
</dbReference>
<dbReference type="GO" id="GO:0005739">
    <property type="term" value="C:mitochondrion"/>
    <property type="evidence" value="ECO:0007669"/>
    <property type="project" value="UniProtKB-SubCell"/>
</dbReference>
<dbReference type="GO" id="GO:0005525">
    <property type="term" value="F:GTP binding"/>
    <property type="evidence" value="ECO:0007669"/>
    <property type="project" value="UniProtKB-UniRule"/>
</dbReference>
<dbReference type="GO" id="GO:0003924">
    <property type="term" value="F:GTPase activity"/>
    <property type="evidence" value="ECO:0007669"/>
    <property type="project" value="UniProtKB-UniRule"/>
</dbReference>
<dbReference type="GO" id="GO:0003746">
    <property type="term" value="F:translation elongation factor activity"/>
    <property type="evidence" value="ECO:0007669"/>
    <property type="project" value="UniProtKB-UniRule"/>
</dbReference>
<dbReference type="GO" id="GO:0070125">
    <property type="term" value="P:mitochondrial translational elongation"/>
    <property type="evidence" value="ECO:0007669"/>
    <property type="project" value="UniProtKB-UniRule"/>
</dbReference>
<dbReference type="CDD" id="cd01886">
    <property type="entry name" value="EF-G"/>
    <property type="match status" value="1"/>
</dbReference>
<dbReference type="CDD" id="cd16262">
    <property type="entry name" value="EFG_III"/>
    <property type="match status" value="1"/>
</dbReference>
<dbReference type="CDD" id="cd01434">
    <property type="entry name" value="EFG_mtEFG1_IV"/>
    <property type="match status" value="1"/>
</dbReference>
<dbReference type="CDD" id="cd04097">
    <property type="entry name" value="mtEFG1_C"/>
    <property type="match status" value="1"/>
</dbReference>
<dbReference type="CDD" id="cd04091">
    <property type="entry name" value="mtEFG1_II_like"/>
    <property type="match status" value="1"/>
</dbReference>
<dbReference type="FunFam" id="3.30.230.10:FF:000003">
    <property type="entry name" value="Elongation factor G"/>
    <property type="match status" value="1"/>
</dbReference>
<dbReference type="FunFam" id="3.30.70.870:FF:000001">
    <property type="entry name" value="Elongation factor G"/>
    <property type="match status" value="1"/>
</dbReference>
<dbReference type="FunFam" id="2.40.30.10:FF:000022">
    <property type="entry name" value="Elongation factor G, mitochondrial"/>
    <property type="match status" value="1"/>
</dbReference>
<dbReference type="FunFam" id="3.30.70.240:FF:000015">
    <property type="entry name" value="Elongation factor G, mitochondrial"/>
    <property type="match status" value="1"/>
</dbReference>
<dbReference type="FunFam" id="3.40.50.300:FF:000558">
    <property type="entry name" value="Elongation factor G, mitochondrial"/>
    <property type="match status" value="1"/>
</dbReference>
<dbReference type="Gene3D" id="3.30.230.10">
    <property type="match status" value="1"/>
</dbReference>
<dbReference type="Gene3D" id="3.30.70.240">
    <property type="match status" value="1"/>
</dbReference>
<dbReference type="Gene3D" id="3.30.70.870">
    <property type="entry name" value="Elongation Factor G (Translational Gtpase), domain 3"/>
    <property type="match status" value="1"/>
</dbReference>
<dbReference type="Gene3D" id="3.40.50.300">
    <property type="entry name" value="P-loop containing nucleotide triphosphate hydrolases"/>
    <property type="match status" value="1"/>
</dbReference>
<dbReference type="Gene3D" id="2.40.30.10">
    <property type="entry name" value="Translation factors"/>
    <property type="match status" value="1"/>
</dbReference>
<dbReference type="HAMAP" id="MF_00054_B">
    <property type="entry name" value="EF_G_EF_2_B"/>
    <property type="match status" value="1"/>
</dbReference>
<dbReference type="InterPro" id="IPR041095">
    <property type="entry name" value="EFG_II"/>
</dbReference>
<dbReference type="InterPro" id="IPR009022">
    <property type="entry name" value="EFG_III"/>
</dbReference>
<dbReference type="InterPro" id="IPR035647">
    <property type="entry name" value="EFG_III/V"/>
</dbReference>
<dbReference type="InterPro" id="IPR047872">
    <property type="entry name" value="EFG_IV"/>
</dbReference>
<dbReference type="InterPro" id="IPR035649">
    <property type="entry name" value="EFG_V"/>
</dbReference>
<dbReference type="InterPro" id="IPR000640">
    <property type="entry name" value="EFG_V-like"/>
</dbReference>
<dbReference type="InterPro" id="IPR004161">
    <property type="entry name" value="EFTu-like_2"/>
</dbReference>
<dbReference type="InterPro" id="IPR031157">
    <property type="entry name" value="G_TR_CS"/>
</dbReference>
<dbReference type="InterPro" id="IPR027417">
    <property type="entry name" value="P-loop_NTPase"/>
</dbReference>
<dbReference type="InterPro" id="IPR020568">
    <property type="entry name" value="Ribosomal_Su5_D2-typ_SF"/>
</dbReference>
<dbReference type="InterPro" id="IPR014721">
    <property type="entry name" value="Ribsml_uS5_D2-typ_fold_subgr"/>
</dbReference>
<dbReference type="InterPro" id="IPR005225">
    <property type="entry name" value="Small_GTP-bd"/>
</dbReference>
<dbReference type="InterPro" id="IPR000795">
    <property type="entry name" value="T_Tr_GTP-bd_dom"/>
</dbReference>
<dbReference type="InterPro" id="IPR009000">
    <property type="entry name" value="Transl_B-barrel_sf"/>
</dbReference>
<dbReference type="InterPro" id="IPR004540">
    <property type="entry name" value="Transl_elong_EFG/EF2"/>
</dbReference>
<dbReference type="InterPro" id="IPR005517">
    <property type="entry name" value="Transl_elong_EFG/EF2_IV"/>
</dbReference>
<dbReference type="NCBIfam" id="TIGR00484">
    <property type="entry name" value="EF-G"/>
    <property type="match status" value="1"/>
</dbReference>
<dbReference type="NCBIfam" id="NF009381">
    <property type="entry name" value="PRK12740.1-5"/>
    <property type="match status" value="1"/>
</dbReference>
<dbReference type="NCBIfam" id="TIGR00231">
    <property type="entry name" value="small_GTP"/>
    <property type="match status" value="1"/>
</dbReference>
<dbReference type="PANTHER" id="PTHR43636">
    <property type="entry name" value="ELONGATION FACTOR G, MITOCHONDRIAL"/>
    <property type="match status" value="1"/>
</dbReference>
<dbReference type="PANTHER" id="PTHR43636:SF2">
    <property type="entry name" value="ELONGATION FACTOR G, MITOCHONDRIAL"/>
    <property type="match status" value="1"/>
</dbReference>
<dbReference type="Pfam" id="PF00679">
    <property type="entry name" value="EFG_C"/>
    <property type="match status" value="1"/>
</dbReference>
<dbReference type="Pfam" id="PF14492">
    <property type="entry name" value="EFG_III"/>
    <property type="match status" value="1"/>
</dbReference>
<dbReference type="Pfam" id="PF03764">
    <property type="entry name" value="EFG_IV"/>
    <property type="match status" value="1"/>
</dbReference>
<dbReference type="Pfam" id="PF00009">
    <property type="entry name" value="GTP_EFTU"/>
    <property type="match status" value="1"/>
</dbReference>
<dbReference type="Pfam" id="PF03144">
    <property type="entry name" value="GTP_EFTU_D2"/>
    <property type="match status" value="1"/>
</dbReference>
<dbReference type="PRINTS" id="PR00315">
    <property type="entry name" value="ELONGATNFCT"/>
</dbReference>
<dbReference type="SMART" id="SM00838">
    <property type="entry name" value="EFG_C"/>
    <property type="match status" value="1"/>
</dbReference>
<dbReference type="SMART" id="SM00889">
    <property type="entry name" value="EFG_IV"/>
    <property type="match status" value="1"/>
</dbReference>
<dbReference type="SUPFAM" id="SSF54980">
    <property type="entry name" value="EF-G C-terminal domain-like"/>
    <property type="match status" value="2"/>
</dbReference>
<dbReference type="SUPFAM" id="SSF52540">
    <property type="entry name" value="P-loop containing nucleoside triphosphate hydrolases"/>
    <property type="match status" value="1"/>
</dbReference>
<dbReference type="SUPFAM" id="SSF54211">
    <property type="entry name" value="Ribosomal protein S5 domain 2-like"/>
    <property type="match status" value="1"/>
</dbReference>
<dbReference type="SUPFAM" id="SSF50447">
    <property type="entry name" value="Translation proteins"/>
    <property type="match status" value="1"/>
</dbReference>
<dbReference type="PROSITE" id="PS00301">
    <property type="entry name" value="G_TR_1"/>
    <property type="match status" value="1"/>
</dbReference>
<dbReference type="PROSITE" id="PS51722">
    <property type="entry name" value="G_TR_2"/>
    <property type="match status" value="1"/>
</dbReference>
<accession>Q6CRY5</accession>
<name>EFGM_KLULA</name>
<gene>
    <name evidence="1" type="primary">MEF1</name>
    <name type="ordered locus">KLLA0D05467g</name>
</gene>